<gene>
    <name evidence="1" type="primary">der</name>
    <name type="synonym">engA</name>
    <name type="ordered locus">A1G_05685</name>
</gene>
<organism>
    <name type="scientific">Rickettsia rickettsii (strain Sheila Smith)</name>
    <dbReference type="NCBI Taxonomy" id="392021"/>
    <lineage>
        <taxon>Bacteria</taxon>
        <taxon>Pseudomonadati</taxon>
        <taxon>Pseudomonadota</taxon>
        <taxon>Alphaproteobacteria</taxon>
        <taxon>Rickettsiales</taxon>
        <taxon>Rickettsiaceae</taxon>
        <taxon>Rickettsieae</taxon>
        <taxon>Rickettsia</taxon>
        <taxon>spotted fever group</taxon>
    </lineage>
</organism>
<protein>
    <recommendedName>
        <fullName evidence="1">GTPase Der</fullName>
    </recommendedName>
    <alternativeName>
        <fullName evidence="1">GTP-binding protein EngA</fullName>
    </alternativeName>
</protein>
<name>DER_RICRS</name>
<evidence type="ECO:0000255" key="1">
    <source>
        <dbReference type="HAMAP-Rule" id="MF_00195"/>
    </source>
</evidence>
<accession>A8GT93</accession>
<sequence>MTKQIITLVGRPNVGKSTLFNRLSIRKKAIVHDLPGVTRDRKYTDGKIGSFEFLLIDTPGLDEHPNSMGKRLIEQTTKAILEADLICFMVDARSGILPDDKLLSSFVRKYNKPAILVVNKCEKAFDFDKEYYKLGFDSMIAISAEHGTGLIDLYDEIIAKLPEEESIETNIADPIKGDCLQIVVSGRPNAGKSTFINALINDERLLTGPEAGITRESIEIDWQYKNNHIKLIDTAGLRKKSTITESLEKLSASDTINSIKLANTVILMIDALAPLKQQDLNIASHVVNEGRSIVIVVNKWDLVKESEKEAFQEEFYYQINTHLPQVKGIPVLFISAINKQNIEQVLDACLKIYKIWNKKITTSKLNEWLNFTTEAHLLPLQKGGRRVRVKYMTQTKTRPPTFKLFSNNPEKITDSYTRYLVNNMREAFDMPGVPIRFTYVKTKNPYV</sequence>
<reference key="1">
    <citation type="submission" date="2007-09" db="EMBL/GenBank/DDBJ databases">
        <title>Complete genome sequence of Rickettsia rickettsii.</title>
        <authorList>
            <person name="Madan A."/>
            <person name="Fahey J."/>
            <person name="Helton E."/>
            <person name="Ketteman M."/>
            <person name="Madan A."/>
            <person name="Rodrigues S."/>
            <person name="Sanchez A."/>
            <person name="Dasch G."/>
            <person name="Eremeeva M."/>
        </authorList>
    </citation>
    <scope>NUCLEOTIDE SEQUENCE [LARGE SCALE GENOMIC DNA]</scope>
    <source>
        <strain>Sheila Smith</strain>
    </source>
</reference>
<comment type="function">
    <text evidence="1">GTPase that plays an essential role in the late steps of ribosome biogenesis.</text>
</comment>
<comment type="subunit">
    <text evidence="1">Associates with the 50S ribosomal subunit.</text>
</comment>
<comment type="similarity">
    <text evidence="1">Belongs to the TRAFAC class TrmE-Era-EngA-EngB-Septin-like GTPase superfamily. EngA (Der) GTPase family.</text>
</comment>
<keyword id="KW-0342">GTP-binding</keyword>
<keyword id="KW-0547">Nucleotide-binding</keyword>
<keyword id="KW-0677">Repeat</keyword>
<keyword id="KW-0690">Ribosome biogenesis</keyword>
<feature type="chain" id="PRO_1000011726" description="GTPase Der">
    <location>
        <begin position="1"/>
        <end position="447"/>
    </location>
</feature>
<feature type="domain" description="EngA-type G 1">
    <location>
        <begin position="4"/>
        <end position="165"/>
    </location>
</feature>
<feature type="domain" description="EngA-type G 2">
    <location>
        <begin position="180"/>
        <end position="357"/>
    </location>
</feature>
<feature type="domain" description="KH-like" evidence="1">
    <location>
        <begin position="358"/>
        <end position="443"/>
    </location>
</feature>
<feature type="binding site" evidence="1">
    <location>
        <begin position="10"/>
        <end position="17"/>
    </location>
    <ligand>
        <name>GTP</name>
        <dbReference type="ChEBI" id="CHEBI:37565"/>
        <label>1</label>
    </ligand>
</feature>
<feature type="binding site" evidence="1">
    <location>
        <begin position="57"/>
        <end position="61"/>
    </location>
    <ligand>
        <name>GTP</name>
        <dbReference type="ChEBI" id="CHEBI:37565"/>
        <label>1</label>
    </ligand>
</feature>
<feature type="binding site" evidence="1">
    <location>
        <begin position="119"/>
        <end position="122"/>
    </location>
    <ligand>
        <name>GTP</name>
        <dbReference type="ChEBI" id="CHEBI:37565"/>
        <label>1</label>
    </ligand>
</feature>
<feature type="binding site" evidence="1">
    <location>
        <begin position="186"/>
        <end position="193"/>
    </location>
    <ligand>
        <name>GTP</name>
        <dbReference type="ChEBI" id="CHEBI:37565"/>
        <label>2</label>
    </ligand>
</feature>
<feature type="binding site" evidence="1">
    <location>
        <begin position="233"/>
        <end position="237"/>
    </location>
    <ligand>
        <name>GTP</name>
        <dbReference type="ChEBI" id="CHEBI:37565"/>
        <label>2</label>
    </ligand>
</feature>
<feature type="binding site" evidence="1">
    <location>
        <begin position="298"/>
        <end position="301"/>
    </location>
    <ligand>
        <name>GTP</name>
        <dbReference type="ChEBI" id="CHEBI:37565"/>
        <label>2</label>
    </ligand>
</feature>
<dbReference type="EMBL" id="CP000848">
    <property type="protein sequence ID" value="ABV76618.1"/>
    <property type="molecule type" value="Genomic_DNA"/>
</dbReference>
<dbReference type="RefSeq" id="WP_012151173.1">
    <property type="nucleotide sequence ID" value="NZ_CP121767.1"/>
</dbReference>
<dbReference type="SMR" id="A8GT93"/>
<dbReference type="GeneID" id="79937694"/>
<dbReference type="KEGG" id="rri:A1G_05685"/>
<dbReference type="HOGENOM" id="CLU_016077_5_0_5"/>
<dbReference type="Proteomes" id="UP000006832">
    <property type="component" value="Chromosome"/>
</dbReference>
<dbReference type="GO" id="GO:0005525">
    <property type="term" value="F:GTP binding"/>
    <property type="evidence" value="ECO:0007669"/>
    <property type="project" value="UniProtKB-UniRule"/>
</dbReference>
<dbReference type="GO" id="GO:0042254">
    <property type="term" value="P:ribosome biogenesis"/>
    <property type="evidence" value="ECO:0007669"/>
    <property type="project" value="UniProtKB-KW"/>
</dbReference>
<dbReference type="CDD" id="cd01894">
    <property type="entry name" value="EngA1"/>
    <property type="match status" value="1"/>
</dbReference>
<dbReference type="CDD" id="cd01895">
    <property type="entry name" value="EngA2"/>
    <property type="match status" value="1"/>
</dbReference>
<dbReference type="FunFam" id="3.30.300.20:FF:000004">
    <property type="entry name" value="GTPase Der"/>
    <property type="match status" value="1"/>
</dbReference>
<dbReference type="Gene3D" id="3.30.300.20">
    <property type="match status" value="1"/>
</dbReference>
<dbReference type="Gene3D" id="3.40.50.300">
    <property type="entry name" value="P-loop containing nucleotide triphosphate hydrolases"/>
    <property type="match status" value="2"/>
</dbReference>
<dbReference type="HAMAP" id="MF_00195">
    <property type="entry name" value="GTPase_Der"/>
    <property type="match status" value="1"/>
</dbReference>
<dbReference type="InterPro" id="IPR031166">
    <property type="entry name" value="G_ENGA"/>
</dbReference>
<dbReference type="InterPro" id="IPR006073">
    <property type="entry name" value="GTP-bd"/>
</dbReference>
<dbReference type="InterPro" id="IPR016484">
    <property type="entry name" value="GTPase_Der"/>
</dbReference>
<dbReference type="InterPro" id="IPR032859">
    <property type="entry name" value="KH_dom-like"/>
</dbReference>
<dbReference type="InterPro" id="IPR015946">
    <property type="entry name" value="KH_dom-like_a/b"/>
</dbReference>
<dbReference type="InterPro" id="IPR027417">
    <property type="entry name" value="P-loop_NTPase"/>
</dbReference>
<dbReference type="InterPro" id="IPR005225">
    <property type="entry name" value="Small_GTP-bd"/>
</dbReference>
<dbReference type="NCBIfam" id="TIGR03594">
    <property type="entry name" value="GTPase_EngA"/>
    <property type="match status" value="1"/>
</dbReference>
<dbReference type="NCBIfam" id="TIGR00231">
    <property type="entry name" value="small_GTP"/>
    <property type="match status" value="2"/>
</dbReference>
<dbReference type="PANTHER" id="PTHR43834">
    <property type="entry name" value="GTPASE DER"/>
    <property type="match status" value="1"/>
</dbReference>
<dbReference type="PANTHER" id="PTHR43834:SF6">
    <property type="entry name" value="GTPASE DER"/>
    <property type="match status" value="1"/>
</dbReference>
<dbReference type="Pfam" id="PF14714">
    <property type="entry name" value="KH_dom-like"/>
    <property type="match status" value="1"/>
</dbReference>
<dbReference type="Pfam" id="PF01926">
    <property type="entry name" value="MMR_HSR1"/>
    <property type="match status" value="2"/>
</dbReference>
<dbReference type="PIRSF" id="PIRSF006485">
    <property type="entry name" value="GTP-binding_EngA"/>
    <property type="match status" value="1"/>
</dbReference>
<dbReference type="SUPFAM" id="SSF52540">
    <property type="entry name" value="P-loop containing nucleoside triphosphate hydrolases"/>
    <property type="match status" value="2"/>
</dbReference>
<dbReference type="PROSITE" id="PS51712">
    <property type="entry name" value="G_ENGA"/>
    <property type="match status" value="2"/>
</dbReference>
<proteinExistence type="inferred from homology"/>